<evidence type="ECO:0000305" key="1"/>
<accession>Q00835</accession>
<protein>
    <recommendedName>
        <fullName>Trichodiene synthase</fullName>
        <ecNumber>4.2.3.6</ecNumber>
    </recommendedName>
    <alternativeName>
        <fullName>Sesquiterpene cyclase</fullName>
        <shortName>TS</shortName>
    </alternativeName>
</protein>
<gene>
    <name type="primary">TRI5</name>
    <name type="synonym">TOX5</name>
</gene>
<reference key="1">
    <citation type="journal article" date="1997" name="Mycopathologia">
        <title>Screening of fungi for the presence of the trichodiene synthase encoding sequence by hybridization to the Tri5 gene cloned from Fusarium poae.</title>
        <authorList>
            <person name="Fekete C."/>
            <person name="Logrieco A."/>
            <person name="Giczey G."/>
            <person name="Hornok L."/>
        </authorList>
    </citation>
    <scope>NUCLEOTIDE SEQUENCE [GENOMIC DNA]</scope>
</reference>
<dbReference type="EC" id="4.2.3.6"/>
<dbReference type="EMBL" id="U15658">
    <property type="protein sequence ID" value="AAA50765.1"/>
    <property type="molecule type" value="Genomic_DNA"/>
</dbReference>
<dbReference type="SMR" id="Q00835"/>
<dbReference type="UniPathway" id="UPA00267"/>
<dbReference type="GO" id="GO:0045482">
    <property type="term" value="F:trichodiene synthase activity"/>
    <property type="evidence" value="ECO:0007669"/>
    <property type="project" value="UniProtKB-EC"/>
</dbReference>
<dbReference type="GO" id="GO:0016106">
    <property type="term" value="P:sesquiterpenoid biosynthetic process"/>
    <property type="evidence" value="ECO:0007669"/>
    <property type="project" value="InterPro"/>
</dbReference>
<dbReference type="Gene3D" id="1.10.600.10">
    <property type="entry name" value="Farnesyl Diphosphate Synthase"/>
    <property type="match status" value="1"/>
</dbReference>
<dbReference type="InterPro" id="IPR008949">
    <property type="entry name" value="Isoprenoid_synthase_dom_sf"/>
</dbReference>
<dbReference type="InterPro" id="IPR010458">
    <property type="entry name" value="TRI5_ascomyc"/>
</dbReference>
<dbReference type="InterPro" id="IPR024652">
    <property type="entry name" value="Trichodiene_synth"/>
</dbReference>
<dbReference type="Pfam" id="PF06330">
    <property type="entry name" value="TRI5"/>
    <property type="match status" value="1"/>
</dbReference>
<dbReference type="PIRSF" id="PIRSF001388">
    <property type="entry name" value="TRI5"/>
    <property type="match status" value="1"/>
</dbReference>
<dbReference type="SFLD" id="SFLDS00005">
    <property type="entry name" value="Isoprenoid_Synthase_Type_I"/>
    <property type="match status" value="1"/>
</dbReference>
<dbReference type="SFLD" id="SFLDG01021">
    <property type="entry name" value="Trichodiene_Synthase_Like"/>
    <property type="match status" value="1"/>
</dbReference>
<dbReference type="SUPFAM" id="SSF48576">
    <property type="entry name" value="Terpenoid synthases"/>
    <property type="match status" value="1"/>
</dbReference>
<proteinExistence type="inferred from homology"/>
<feature type="chain" id="PRO_0000221582" description="Trichodiene synthase">
    <location>
        <begin position="1"/>
        <end position="377"/>
    </location>
</feature>
<keyword id="KW-0456">Lyase</keyword>
<name>TRI5_FUSPO</name>
<comment type="function">
    <text>TS is a member of the terpene cyclase group of enzymes. It catalyzes the isomerization and cyclization of farnesyl pyro-phosphate to form trichodiene, the first cyclic intermediate in the biosynthetic pathway for trichothecenes. It serves to branch trichothecene biosynthesis from the isoprenoid pathway.</text>
</comment>
<comment type="catalytic activity">
    <reaction>
        <text>(2E,6E)-farnesyl diphosphate = trichodiene + diphosphate</text>
        <dbReference type="Rhea" id="RHEA:12052"/>
        <dbReference type="ChEBI" id="CHEBI:15861"/>
        <dbReference type="ChEBI" id="CHEBI:33019"/>
        <dbReference type="ChEBI" id="CHEBI:175763"/>
        <dbReference type="EC" id="4.2.3.6"/>
    </reaction>
</comment>
<comment type="pathway">
    <text>Sesquiterpene biosynthesis; trichothecene biosynthesis.</text>
</comment>
<comment type="miscellaneous">
    <text>Trichothecenes are sesquiterpenoid toxins that act by inhibiting protein biosynthesis.</text>
</comment>
<comment type="similarity">
    <text evidence="1">Belongs to the trichodiene synthase family.</text>
</comment>
<sequence length="377" mass="44157">MENFPTEYFLNTSVRLLEYIRYRDSNYTREERIENLHYAYNKAAHHFAQPRQQQLLKVDPKRLQASLQTIVGMVVYSWAKVSKECMADLSIHYTYTLVLDDSSDDPYAAMMNYFNDLQAGREQAHPWWALVNEHFPNVLRHFGPFCSLNLIRSTLDFFEGCWIEQYNFGGFPGSHDYPQFLRRMNGLGHCVGASLWPKEQFDERSLFLEITSAIAQMENWMVWVNDLMSFYKEFDDERDQISLVKNYVVSDEISLHEALEKLTQDTLHSSKQMVAVFSDKDPQVMVTIECFMHGYVTWHLCDHRYRLNEISEKVKEQKTEDAQKFCKFYEQAANVGAVSPSEWAYPPVAQLANVRSKDVKNVKQIEKPLLSSIELVE</sequence>
<organism>
    <name type="scientific">Fusarium poae</name>
    <dbReference type="NCBI Taxonomy" id="36050"/>
    <lineage>
        <taxon>Eukaryota</taxon>
        <taxon>Fungi</taxon>
        <taxon>Dikarya</taxon>
        <taxon>Ascomycota</taxon>
        <taxon>Pezizomycotina</taxon>
        <taxon>Sordariomycetes</taxon>
        <taxon>Hypocreomycetidae</taxon>
        <taxon>Hypocreales</taxon>
        <taxon>Nectriaceae</taxon>
        <taxon>Fusarium</taxon>
    </lineage>
</organism>